<gene>
    <name evidence="1" type="primary">secA</name>
    <name type="ordered locus">Tbd_0131</name>
</gene>
<feature type="chain" id="PRO_0000321027" description="Protein translocase subunit SecA">
    <location>
        <begin position="1"/>
        <end position="906"/>
    </location>
</feature>
<feature type="binding site" evidence="1">
    <location>
        <position position="87"/>
    </location>
    <ligand>
        <name>ATP</name>
        <dbReference type="ChEBI" id="CHEBI:30616"/>
    </ligand>
</feature>
<feature type="binding site" evidence="1">
    <location>
        <begin position="105"/>
        <end position="109"/>
    </location>
    <ligand>
        <name>ATP</name>
        <dbReference type="ChEBI" id="CHEBI:30616"/>
    </ligand>
</feature>
<feature type="binding site" evidence="1">
    <location>
        <position position="507"/>
    </location>
    <ligand>
        <name>ATP</name>
        <dbReference type="ChEBI" id="CHEBI:30616"/>
    </ligand>
</feature>
<feature type="binding site" evidence="1">
    <location>
        <position position="890"/>
    </location>
    <ligand>
        <name>Zn(2+)</name>
        <dbReference type="ChEBI" id="CHEBI:29105"/>
    </ligand>
</feature>
<feature type="binding site" evidence="1">
    <location>
        <position position="892"/>
    </location>
    <ligand>
        <name>Zn(2+)</name>
        <dbReference type="ChEBI" id="CHEBI:29105"/>
    </ligand>
</feature>
<feature type="binding site" evidence="1">
    <location>
        <position position="901"/>
    </location>
    <ligand>
        <name>Zn(2+)</name>
        <dbReference type="ChEBI" id="CHEBI:29105"/>
    </ligand>
</feature>
<feature type="binding site" evidence="1">
    <location>
        <position position="902"/>
    </location>
    <ligand>
        <name>Zn(2+)</name>
        <dbReference type="ChEBI" id="CHEBI:29105"/>
    </ligand>
</feature>
<accession>Q3SMG1</accession>
<sequence length="906" mass="100814">MLQSLFKKVFGSRNERLVKQYLQKVKAINALEPAMEQLSDAELAGKTADFKARIEQGTSLDTLLPEAFAVVREAARRVLGLRHYDVQMVGGMVLHDGKIAEMRTGEGKTLMATLPAYLNALAGKGVHVVTVNDYLARRDAEWMGRVYGFLGLTTGVNLSHMPHAEKQAAYAADITYGTNNEYGFDYLRDNMVFEVGEKVQRPLAFGVIDEVDSILIDEARTPLIISGQSEENTALYQQVNLVPPRLTRQKDEESEGDYSVDEKSRQVLLSEAGHEKVEEILTEMGLLQPGGSLYDASNIMLMHHVYAALRAHALFFKDQHYVVQNGEVVIVDEFTGRLMSGRRWSEGLHQAVEAKEGVAIQKENQTLASITFQNFFRMYEKLSGMTGTADTEAFEFQSIYGLETVVIPTHRPMIRKDEHDQVYRTGRERDQAVINDVRACHERGQPVLVGTTSIEANEKLSAELKKAGLPHNVLNAKQHASEAEVIAQAGLPGAVTIATNMAGRGTDIVLGGSIQKEVDAIRNDAALADGEKDARITALKADWQTRHDAVLAAGGLHIIGTERHESRRVDNQLRGRSGRQGDPGSSRFFLSLEDPLLRIFASDRVAAIMNRLKMPEGEAIEHPWVTRAIENAQRKVEQRNFDIRKQLLEYDDVSNDQRKVIYEQRNELLASVEIGDTIRAMRYDVLGETIDQHIAPGSMDEQWDVAGLEKTLAAQFTLELPLRQWLDEDKTLNEEGLRKKILAAADAAYAEKEALVGAEGLRRFERAVMLQSLDTHWREHLSALDHLRQGIHLRGYAQKQPKQEYKREAFELFSAMLAAIKAEVTQITTTVQVRAPEDVQAVELHEEPSNVQYEHAGYDEGADFAAAESAEAAPSGPVHVGPKVGRNDPCPCGSGKKYKQCHGKLA</sequence>
<evidence type="ECO:0000255" key="1">
    <source>
        <dbReference type="HAMAP-Rule" id="MF_01382"/>
    </source>
</evidence>
<evidence type="ECO:0000305" key="2"/>
<keyword id="KW-0067">ATP-binding</keyword>
<keyword id="KW-0997">Cell inner membrane</keyword>
<keyword id="KW-1003">Cell membrane</keyword>
<keyword id="KW-0963">Cytoplasm</keyword>
<keyword id="KW-0472">Membrane</keyword>
<keyword id="KW-0479">Metal-binding</keyword>
<keyword id="KW-0547">Nucleotide-binding</keyword>
<keyword id="KW-0653">Protein transport</keyword>
<keyword id="KW-1185">Reference proteome</keyword>
<keyword id="KW-1278">Translocase</keyword>
<keyword id="KW-0811">Translocation</keyword>
<keyword id="KW-0813">Transport</keyword>
<keyword id="KW-0862">Zinc</keyword>
<comment type="function">
    <text evidence="1">Part of the Sec protein translocase complex. Interacts with the SecYEG preprotein conducting channel. Has a central role in coupling the hydrolysis of ATP to the transfer of proteins into and across the cell membrane, serving both as a receptor for the preprotein-SecB complex and as an ATP-driven molecular motor driving the stepwise translocation of polypeptide chains across the membrane.</text>
</comment>
<comment type="catalytic activity">
    <reaction evidence="1">
        <text>ATP + H2O + cellular proteinSide 1 = ADP + phosphate + cellular proteinSide 2.</text>
        <dbReference type="EC" id="7.4.2.8"/>
    </reaction>
</comment>
<comment type="cofactor">
    <cofactor evidence="1">
        <name>Zn(2+)</name>
        <dbReference type="ChEBI" id="CHEBI:29105"/>
    </cofactor>
    <text evidence="1">May bind 1 zinc ion per subunit.</text>
</comment>
<comment type="subunit">
    <text evidence="1">Monomer and homodimer. Part of the essential Sec protein translocation apparatus which comprises SecA, SecYEG and auxiliary proteins SecDF-YajC and YidC.</text>
</comment>
<comment type="subcellular location">
    <subcellularLocation>
        <location evidence="1">Cell inner membrane</location>
        <topology evidence="1">Peripheral membrane protein</topology>
        <orientation evidence="1">Cytoplasmic side</orientation>
    </subcellularLocation>
    <subcellularLocation>
        <location evidence="1">Cytoplasm</location>
    </subcellularLocation>
    <text evidence="1">Distribution is 50-50.</text>
</comment>
<comment type="similarity">
    <text evidence="1">Belongs to the SecA family.</text>
</comment>
<comment type="sequence caution" evidence="2">
    <conflict type="erroneous initiation">
        <sequence resource="EMBL-CDS" id="AAZ96084"/>
    </conflict>
    <text>Extended N-terminus.</text>
</comment>
<protein>
    <recommendedName>
        <fullName evidence="1">Protein translocase subunit SecA</fullName>
        <ecNumber evidence="1">7.4.2.8</ecNumber>
    </recommendedName>
</protein>
<name>SECA_THIDA</name>
<organism>
    <name type="scientific">Thiobacillus denitrificans (strain ATCC 25259 / T1)</name>
    <dbReference type="NCBI Taxonomy" id="292415"/>
    <lineage>
        <taxon>Bacteria</taxon>
        <taxon>Pseudomonadati</taxon>
        <taxon>Pseudomonadota</taxon>
        <taxon>Betaproteobacteria</taxon>
        <taxon>Nitrosomonadales</taxon>
        <taxon>Thiobacillaceae</taxon>
        <taxon>Thiobacillus</taxon>
    </lineage>
</organism>
<dbReference type="EC" id="7.4.2.8" evidence="1"/>
<dbReference type="EMBL" id="CP000116">
    <property type="protein sequence ID" value="AAZ96084.1"/>
    <property type="status" value="ALT_INIT"/>
    <property type="molecule type" value="Genomic_DNA"/>
</dbReference>
<dbReference type="RefSeq" id="WP_041432157.1">
    <property type="nucleotide sequence ID" value="NC_007404.1"/>
</dbReference>
<dbReference type="SMR" id="Q3SMG1"/>
<dbReference type="STRING" id="292415.Tbd_0131"/>
<dbReference type="KEGG" id="tbd:Tbd_0131"/>
<dbReference type="eggNOG" id="COG0653">
    <property type="taxonomic scope" value="Bacteria"/>
</dbReference>
<dbReference type="HOGENOM" id="CLU_005314_3_0_4"/>
<dbReference type="OrthoDB" id="9805579at2"/>
<dbReference type="Proteomes" id="UP000008291">
    <property type="component" value="Chromosome"/>
</dbReference>
<dbReference type="GO" id="GO:0031522">
    <property type="term" value="C:cell envelope Sec protein transport complex"/>
    <property type="evidence" value="ECO:0007669"/>
    <property type="project" value="TreeGrafter"/>
</dbReference>
<dbReference type="GO" id="GO:0005829">
    <property type="term" value="C:cytosol"/>
    <property type="evidence" value="ECO:0007669"/>
    <property type="project" value="TreeGrafter"/>
</dbReference>
<dbReference type="GO" id="GO:0005886">
    <property type="term" value="C:plasma membrane"/>
    <property type="evidence" value="ECO:0007669"/>
    <property type="project" value="UniProtKB-SubCell"/>
</dbReference>
<dbReference type="GO" id="GO:0005524">
    <property type="term" value="F:ATP binding"/>
    <property type="evidence" value="ECO:0007669"/>
    <property type="project" value="UniProtKB-UniRule"/>
</dbReference>
<dbReference type="GO" id="GO:0046872">
    <property type="term" value="F:metal ion binding"/>
    <property type="evidence" value="ECO:0007669"/>
    <property type="project" value="UniProtKB-KW"/>
</dbReference>
<dbReference type="GO" id="GO:0008564">
    <property type="term" value="F:protein-exporting ATPase activity"/>
    <property type="evidence" value="ECO:0007669"/>
    <property type="project" value="UniProtKB-EC"/>
</dbReference>
<dbReference type="GO" id="GO:0065002">
    <property type="term" value="P:intracellular protein transmembrane transport"/>
    <property type="evidence" value="ECO:0007669"/>
    <property type="project" value="UniProtKB-UniRule"/>
</dbReference>
<dbReference type="GO" id="GO:0017038">
    <property type="term" value="P:protein import"/>
    <property type="evidence" value="ECO:0007669"/>
    <property type="project" value="InterPro"/>
</dbReference>
<dbReference type="GO" id="GO:0006605">
    <property type="term" value="P:protein targeting"/>
    <property type="evidence" value="ECO:0007669"/>
    <property type="project" value="UniProtKB-UniRule"/>
</dbReference>
<dbReference type="GO" id="GO:0043952">
    <property type="term" value="P:protein transport by the Sec complex"/>
    <property type="evidence" value="ECO:0007669"/>
    <property type="project" value="TreeGrafter"/>
</dbReference>
<dbReference type="CDD" id="cd17928">
    <property type="entry name" value="DEXDc_SecA"/>
    <property type="match status" value="1"/>
</dbReference>
<dbReference type="CDD" id="cd18803">
    <property type="entry name" value="SF2_C_secA"/>
    <property type="match status" value="1"/>
</dbReference>
<dbReference type="FunFam" id="3.40.50.300:FF:000113">
    <property type="entry name" value="Preprotein translocase subunit SecA"/>
    <property type="match status" value="1"/>
</dbReference>
<dbReference type="FunFam" id="3.90.1440.10:FF:000001">
    <property type="entry name" value="Preprotein translocase subunit SecA"/>
    <property type="match status" value="1"/>
</dbReference>
<dbReference type="FunFam" id="1.10.3060.10:FF:000003">
    <property type="entry name" value="Protein translocase subunit SecA"/>
    <property type="match status" value="1"/>
</dbReference>
<dbReference type="FunFam" id="3.40.50.300:FF:000334">
    <property type="entry name" value="Protein translocase subunit SecA"/>
    <property type="match status" value="1"/>
</dbReference>
<dbReference type="Gene3D" id="1.10.3060.10">
    <property type="entry name" value="Helical scaffold and wing domains of SecA"/>
    <property type="match status" value="1"/>
</dbReference>
<dbReference type="Gene3D" id="3.40.50.300">
    <property type="entry name" value="P-loop containing nucleotide triphosphate hydrolases"/>
    <property type="match status" value="2"/>
</dbReference>
<dbReference type="Gene3D" id="3.90.1440.10">
    <property type="entry name" value="SecA, preprotein cross-linking domain"/>
    <property type="match status" value="1"/>
</dbReference>
<dbReference type="HAMAP" id="MF_01382">
    <property type="entry name" value="SecA"/>
    <property type="match status" value="1"/>
</dbReference>
<dbReference type="InterPro" id="IPR014001">
    <property type="entry name" value="Helicase_ATP-bd"/>
</dbReference>
<dbReference type="InterPro" id="IPR027417">
    <property type="entry name" value="P-loop_NTPase"/>
</dbReference>
<dbReference type="InterPro" id="IPR004027">
    <property type="entry name" value="SEC_C_motif"/>
</dbReference>
<dbReference type="InterPro" id="IPR000185">
    <property type="entry name" value="SecA"/>
</dbReference>
<dbReference type="InterPro" id="IPR020937">
    <property type="entry name" value="SecA_CS"/>
</dbReference>
<dbReference type="InterPro" id="IPR011115">
    <property type="entry name" value="SecA_DEAD"/>
</dbReference>
<dbReference type="InterPro" id="IPR014018">
    <property type="entry name" value="SecA_motor_DEAD"/>
</dbReference>
<dbReference type="InterPro" id="IPR011130">
    <property type="entry name" value="SecA_preprotein_X-link_dom"/>
</dbReference>
<dbReference type="InterPro" id="IPR044722">
    <property type="entry name" value="SecA_SF2_C"/>
</dbReference>
<dbReference type="InterPro" id="IPR011116">
    <property type="entry name" value="SecA_Wing/Scaffold"/>
</dbReference>
<dbReference type="InterPro" id="IPR036266">
    <property type="entry name" value="SecA_Wing/Scaffold_sf"/>
</dbReference>
<dbReference type="InterPro" id="IPR036670">
    <property type="entry name" value="SecA_X-link_sf"/>
</dbReference>
<dbReference type="NCBIfam" id="NF009538">
    <property type="entry name" value="PRK12904.1"/>
    <property type="match status" value="1"/>
</dbReference>
<dbReference type="NCBIfam" id="TIGR00963">
    <property type="entry name" value="secA"/>
    <property type="match status" value="1"/>
</dbReference>
<dbReference type="PANTHER" id="PTHR30612:SF0">
    <property type="entry name" value="CHLOROPLAST PROTEIN-TRANSPORTING ATPASE"/>
    <property type="match status" value="1"/>
</dbReference>
<dbReference type="PANTHER" id="PTHR30612">
    <property type="entry name" value="SECA INNER MEMBRANE COMPONENT OF SEC PROTEIN SECRETION SYSTEM"/>
    <property type="match status" value="1"/>
</dbReference>
<dbReference type="Pfam" id="PF21090">
    <property type="entry name" value="P-loop_SecA"/>
    <property type="match status" value="1"/>
</dbReference>
<dbReference type="Pfam" id="PF02810">
    <property type="entry name" value="SEC-C"/>
    <property type="match status" value="1"/>
</dbReference>
<dbReference type="Pfam" id="PF07517">
    <property type="entry name" value="SecA_DEAD"/>
    <property type="match status" value="1"/>
</dbReference>
<dbReference type="Pfam" id="PF01043">
    <property type="entry name" value="SecA_PP_bind"/>
    <property type="match status" value="1"/>
</dbReference>
<dbReference type="Pfam" id="PF07516">
    <property type="entry name" value="SecA_SW"/>
    <property type="match status" value="1"/>
</dbReference>
<dbReference type="PRINTS" id="PR00906">
    <property type="entry name" value="SECA"/>
</dbReference>
<dbReference type="SMART" id="SM00957">
    <property type="entry name" value="SecA_DEAD"/>
    <property type="match status" value="1"/>
</dbReference>
<dbReference type="SMART" id="SM00958">
    <property type="entry name" value="SecA_PP_bind"/>
    <property type="match status" value="1"/>
</dbReference>
<dbReference type="SUPFAM" id="SSF81886">
    <property type="entry name" value="Helical scaffold and wing domains of SecA"/>
    <property type="match status" value="1"/>
</dbReference>
<dbReference type="SUPFAM" id="SSF52540">
    <property type="entry name" value="P-loop containing nucleoside triphosphate hydrolases"/>
    <property type="match status" value="2"/>
</dbReference>
<dbReference type="SUPFAM" id="SSF81767">
    <property type="entry name" value="Pre-protein crosslinking domain of SecA"/>
    <property type="match status" value="1"/>
</dbReference>
<dbReference type="PROSITE" id="PS01312">
    <property type="entry name" value="SECA"/>
    <property type="match status" value="1"/>
</dbReference>
<dbReference type="PROSITE" id="PS51196">
    <property type="entry name" value="SECA_MOTOR_DEAD"/>
    <property type="match status" value="1"/>
</dbReference>
<proteinExistence type="inferred from homology"/>
<reference key="1">
    <citation type="journal article" date="2006" name="J. Bacteriol.">
        <title>The genome sequence of the obligately chemolithoautotrophic, facultatively anaerobic bacterium Thiobacillus denitrificans.</title>
        <authorList>
            <person name="Beller H.R."/>
            <person name="Chain P.S."/>
            <person name="Letain T.E."/>
            <person name="Chakicherla A."/>
            <person name="Larimer F.W."/>
            <person name="Richardson P.M."/>
            <person name="Coleman M.A."/>
            <person name="Wood A.P."/>
            <person name="Kelly D.P."/>
        </authorList>
    </citation>
    <scope>NUCLEOTIDE SEQUENCE [LARGE SCALE GENOMIC DNA]</scope>
    <source>
        <strain>ATCC 25259 / T1</strain>
    </source>
</reference>